<sequence>MKSVELGPRARRDLTKLRRWLLNRAPSAADRAIDLILSRAEQLAQHSDLGRRKSQNMRELYVSFGAHGYVLQYRVYPDAVVIARIRHSLERR</sequence>
<reference key="1">
    <citation type="journal article" date="2001" name="Proc. Natl. Acad. Sci. U.S.A.">
        <title>Complete genome sequence of Caulobacter crescentus.</title>
        <authorList>
            <person name="Nierman W.C."/>
            <person name="Feldblyum T.V."/>
            <person name="Laub M.T."/>
            <person name="Paulsen I.T."/>
            <person name="Nelson K.E."/>
            <person name="Eisen J.A."/>
            <person name="Heidelberg J.F."/>
            <person name="Alley M.R.K."/>
            <person name="Ohta N."/>
            <person name="Maddock J.R."/>
            <person name="Potocka I."/>
            <person name="Nelson W.C."/>
            <person name="Newton A."/>
            <person name="Stephens C."/>
            <person name="Phadke N.D."/>
            <person name="Ely B."/>
            <person name="DeBoy R.T."/>
            <person name="Dodson R.J."/>
            <person name="Durkin A.S."/>
            <person name="Gwinn M.L."/>
            <person name="Haft D.H."/>
            <person name="Kolonay J.F."/>
            <person name="Smit J."/>
            <person name="Craven M.B."/>
            <person name="Khouri H.M."/>
            <person name="Shetty J."/>
            <person name="Berry K.J."/>
            <person name="Utterback T.R."/>
            <person name="Tran K."/>
            <person name="Wolf A.M."/>
            <person name="Vamathevan J.J."/>
            <person name="Ermolaeva M.D."/>
            <person name="White O."/>
            <person name="Salzberg S.L."/>
            <person name="Venter J.C."/>
            <person name="Shapiro L."/>
            <person name="Fraser C.M."/>
        </authorList>
    </citation>
    <scope>NUCLEOTIDE SEQUENCE [LARGE SCALE GENOMIC DNA]</scope>
    <source>
        <strain>ATCC 19089 / CIP 103742 / CB 15</strain>
    </source>
</reference>
<reference key="2">
    <citation type="journal article" date="2005" name="Nucleic Acids Res.">
        <title>Toxin-antitoxin loci are highly abundant in free-living but lost from host-associated prokaryotes.</title>
        <authorList>
            <person name="Pandey D.P."/>
            <person name="Gerdes K."/>
        </authorList>
    </citation>
    <scope>POSSIBLE FUNCTION</scope>
    <source>
        <strain>ATCC 19089 / CIP 103742 / CB 15</strain>
    </source>
</reference>
<reference key="3">
    <citation type="journal article" date="2010" name="Mol. Microbiol.">
        <title>Interaction specificity, toxicity and regulation of a paralogous set of ParE/RelE-family toxin-antitoxin systems.</title>
        <authorList>
            <person name="Fiebig A."/>
            <person name="Castro Rojas C.M."/>
            <person name="Siegal-Gaskins D."/>
            <person name="Crosson S."/>
        </authorList>
    </citation>
    <scope>FUNCTION AS A TOXIN</scope>
    <scope>DISRUPTION PHENOTYPE</scope>
    <source>
        <strain>ATCC 19089 / CIP 103742 / CB 15</strain>
    </source>
</reference>
<name>RELE3_CAUVC</name>
<proteinExistence type="evidence at protein level"/>
<dbReference type="EMBL" id="AE005673">
    <property type="protein sequence ID" value="AAK24844.1"/>
    <property type="molecule type" value="Genomic_DNA"/>
</dbReference>
<dbReference type="PIR" id="H87605">
    <property type="entry name" value="H87605"/>
</dbReference>
<dbReference type="RefSeq" id="NP_421676.1">
    <property type="nucleotide sequence ID" value="NC_002696.2"/>
</dbReference>
<dbReference type="RefSeq" id="WP_010920720.1">
    <property type="nucleotide sequence ID" value="NC_002696.2"/>
</dbReference>
<dbReference type="SMR" id="Q9A4F4"/>
<dbReference type="STRING" id="190650.CC_2880"/>
<dbReference type="EnsemblBacteria" id="AAK24844">
    <property type="protein sequence ID" value="AAK24844"/>
    <property type="gene ID" value="CC_2880"/>
</dbReference>
<dbReference type="KEGG" id="ccr:CC_2880"/>
<dbReference type="eggNOG" id="COG3668">
    <property type="taxonomic scope" value="Bacteria"/>
</dbReference>
<dbReference type="HOGENOM" id="CLU_147162_13_0_5"/>
<dbReference type="BioCyc" id="CAULO:CC2880-MONOMER"/>
<dbReference type="Proteomes" id="UP000001816">
    <property type="component" value="Chromosome"/>
</dbReference>
<dbReference type="GO" id="GO:0009432">
    <property type="term" value="P:SOS response"/>
    <property type="evidence" value="ECO:0000269"/>
    <property type="project" value="CollecTF"/>
</dbReference>
<dbReference type="Gene3D" id="3.30.2310.20">
    <property type="entry name" value="RelE-like"/>
    <property type="match status" value="1"/>
</dbReference>
<dbReference type="InterPro" id="IPR007712">
    <property type="entry name" value="RelE/ParE_toxin"/>
</dbReference>
<dbReference type="InterPro" id="IPR035093">
    <property type="entry name" value="RelE/ParE_toxin_dom_sf"/>
</dbReference>
<dbReference type="InterPro" id="IPR051803">
    <property type="entry name" value="TA_system_RelE-like_toxin"/>
</dbReference>
<dbReference type="PANTHER" id="PTHR33755:SF7">
    <property type="entry name" value="TOXIN MODULE OF TOXIN-ANTITOXIN SYSTEM RELE_STBE FAMILY"/>
    <property type="match status" value="1"/>
</dbReference>
<dbReference type="PANTHER" id="PTHR33755">
    <property type="entry name" value="TOXIN PARE1-RELATED"/>
    <property type="match status" value="1"/>
</dbReference>
<dbReference type="Pfam" id="PF05016">
    <property type="entry name" value="ParE_toxin"/>
    <property type="match status" value="1"/>
</dbReference>
<accession>Q9A4F4</accession>
<evidence type="ECO:0000269" key="1">
    <source>
    </source>
</evidence>
<evidence type="ECO:0000305" key="2"/>
<comment type="function">
    <text evidence="1">Toxic component of a type II toxin-antitoxin (TA) system. Its toxic effect is neutralized by coexpression with cognate antitoxin RelB3 but no other ParD or RelB antitoxin.</text>
</comment>
<comment type="disruption phenotype">
    <text evidence="1">No visible phenotype when deleted singly or as the relBE3 operon.</text>
</comment>
<comment type="similarity">
    <text evidence="2">Belongs to the RelE toxin family.</text>
</comment>
<feature type="chain" id="PRO_0000408376" description="Toxin RelE3">
    <location>
        <begin position="1"/>
        <end position="92"/>
    </location>
</feature>
<gene>
    <name type="primary">relE3</name>
    <name type="ordered locus">CC_2880</name>
</gene>
<protein>
    <recommendedName>
        <fullName>Toxin RelE3</fullName>
    </recommendedName>
</protein>
<organism>
    <name type="scientific">Caulobacter vibrioides (strain ATCC 19089 / CIP 103742 / CB 15)</name>
    <name type="common">Caulobacter crescentus</name>
    <dbReference type="NCBI Taxonomy" id="190650"/>
    <lineage>
        <taxon>Bacteria</taxon>
        <taxon>Pseudomonadati</taxon>
        <taxon>Pseudomonadota</taxon>
        <taxon>Alphaproteobacteria</taxon>
        <taxon>Caulobacterales</taxon>
        <taxon>Caulobacteraceae</taxon>
        <taxon>Caulobacter</taxon>
    </lineage>
</organism>
<keyword id="KW-1185">Reference proteome</keyword>
<keyword id="KW-1277">Toxin-antitoxin system</keyword>